<protein>
    <recommendedName>
        <fullName>Protein TraI</fullName>
    </recommendedName>
</protein>
<geneLocation type="plasmid">
    <name>IncP-beta R751</name>
</geneLocation>
<proteinExistence type="predicted"/>
<organism>
    <name type="scientific">Escherichia coli</name>
    <dbReference type="NCBI Taxonomy" id="562"/>
    <lineage>
        <taxon>Bacteria</taxon>
        <taxon>Pseudomonadati</taxon>
        <taxon>Pseudomonadota</taxon>
        <taxon>Gammaproteobacteria</taxon>
        <taxon>Enterobacterales</taxon>
        <taxon>Enterobacteriaceae</taxon>
        <taxon>Escherichia</taxon>
    </lineage>
</organism>
<reference key="1">
    <citation type="journal article" date="1991" name="DNA Seq.">
        <title>Nucleotide sequence and organization of genes flanking the transfer origin of promiscuous plasmid RP4.</title>
        <authorList>
            <person name="Ziegelin G."/>
            <person name="Pansegrau W."/>
            <person name="Strack B."/>
            <person name="Balzer D."/>
            <person name="Kroeger M."/>
            <person name="Kruft V."/>
            <person name="Lanka E."/>
        </authorList>
    </citation>
    <scope>NUCLEOTIDE SEQUENCE [GENOMIC DNA]</scope>
    <source>
        <strain>ATCC 33694 / HB101</strain>
    </source>
</reference>
<reference key="2">
    <citation type="submission" date="1996-08" db="EMBL/GenBank/DDBJ databases">
        <authorList>
            <person name="Thomas C.M."/>
        </authorList>
    </citation>
    <scope>NUCLEOTIDE SEQUENCE [GENOMIC DNA]</scope>
</reference>
<gene>
    <name type="primary">traI</name>
</gene>
<dbReference type="EMBL" id="X54458">
    <property type="protein sequence ID" value="CAA38329.1"/>
    <property type="molecule type" value="Genomic_DNA"/>
</dbReference>
<dbReference type="EMBL" id="U67194">
    <property type="protein sequence ID" value="AAC64475.1"/>
    <property type="molecule type" value="Genomic_DNA"/>
</dbReference>
<dbReference type="PIR" id="S22994">
    <property type="entry name" value="S22994"/>
</dbReference>
<dbReference type="SMR" id="Q00192"/>
<dbReference type="InterPro" id="IPR005094">
    <property type="entry name" value="Endonuclease_MobA/VirD2"/>
</dbReference>
<dbReference type="InterPro" id="IPR040677">
    <property type="entry name" value="LPD7"/>
</dbReference>
<dbReference type="InterPro" id="IPR054461">
    <property type="entry name" value="TraI-like_C"/>
</dbReference>
<dbReference type="InterPro" id="IPR049751">
    <property type="entry name" value="TraI/MobA_relaxases"/>
</dbReference>
<dbReference type="InterPro" id="IPR054462">
    <property type="entry name" value="TraI_M"/>
</dbReference>
<dbReference type="NCBIfam" id="NF041893">
    <property type="entry name" value="TraI_MobP_relax"/>
    <property type="match status" value="1"/>
</dbReference>
<dbReference type="Pfam" id="PF18821">
    <property type="entry name" value="LPD7"/>
    <property type="match status" value="1"/>
</dbReference>
<dbReference type="Pfam" id="PF03432">
    <property type="entry name" value="Relaxase"/>
    <property type="match status" value="1"/>
</dbReference>
<dbReference type="Pfam" id="PF22287">
    <property type="entry name" value="TraI-like_C"/>
    <property type="match status" value="1"/>
</dbReference>
<dbReference type="Pfam" id="PF22863">
    <property type="entry name" value="TraI_middle"/>
    <property type="match status" value="1"/>
</dbReference>
<name>TRAI5_ECOLX</name>
<comment type="function">
    <text>The initiation process of transfer DNA synthesis requires the interaction of at least three plasmid-specific components (TraH, TraI, and TraJ) at the transfer origin resulting in the assembly of a specialized nucleoprotein complex - the relaxosome. Site and strand specific cleavage at the transfer origin is dependent on TraI and TraJ.</text>
</comment>
<keyword id="KW-0184">Conjugation</keyword>
<keyword id="KW-0614">Plasmid</keyword>
<evidence type="ECO:0000256" key="1">
    <source>
        <dbReference type="SAM" id="MobiDB-lite"/>
    </source>
</evidence>
<sequence>MIAKHVPMRSLGKSDFAGLANYITDAQSKDHRLGHVQATNCEAGSIQDAITEVLATQHTNTRAKGDKTYHLIVSFRAGEQPSADTLRAIEERICVGLGYGEHQRISAVHNDTDNLHIHIAINKIHPTRHTMHEPYYPHRALAELCTALERDYGLERDNHEPRKRGAEGRAADMERHAGVESLVGWIKRECLDEIKGAQSWQELHQVMRDNGMELRVRANGLVFEAGDGTMVKASTVARDLSKPSLEARLGPFEASPERQAQTTAKRQYRKDPIRLRVNTVELYAKYKAEQQSLTTARAQALERARHRKDRLIEAAKRSNRLRRATIKVVGEGRANKKLLYAQASKALRSEIQAINKQFQQERTALYAEHSRRTWADWLKKEAQHGGADALAALRAREAAQGLKGNTIRGEGQAKPGHAPAVDNITKKGTIIFRAGMSAVRDDGDRLQVSREATREGLQEALRLAMQRYGNRITVNGTVEFKAQMIRAAVDSQLPITFTDPALESRRQALLNKENTHERTERPEHRGRTGRGAGGPGQRPAADQHATGAAAVARAGDGRPAAGRGDRADAGLHAATVHRKPDVGRLGRKPPPQSQHRLRALSELGVVRIAGGSEVLLPRDVPRHVEQQGTQPDHALRRGISRPGTGVGQTPPGVAAADKYIAEREAKRLKGFDIPKHSRYTAGDGALTFQGTRTIEGQALALLKRGDEVMVMPIDQATARRLTRIAVGRDAVSITAKGSIKTSKGRSR</sequence>
<accession>Q00192</accession>
<feature type="chain" id="PRO_0000068454" description="Protein TraI">
    <location>
        <begin position="1"/>
        <end position="747"/>
    </location>
</feature>
<feature type="region of interest" description="Disordered" evidence="1">
    <location>
        <begin position="510"/>
        <end position="594"/>
    </location>
</feature>
<feature type="region of interest" description="Disordered" evidence="1">
    <location>
        <begin position="624"/>
        <end position="652"/>
    </location>
</feature>
<feature type="compositionally biased region" description="Basic and acidic residues" evidence="1">
    <location>
        <begin position="513"/>
        <end position="526"/>
    </location>
</feature>
<feature type="compositionally biased region" description="Low complexity" evidence="1">
    <location>
        <begin position="537"/>
        <end position="562"/>
    </location>
</feature>